<feature type="chain" id="PRO_0000092196" description="Cytochrome c biogenesis ATP-binding export protein CcmA">
    <location>
        <begin position="1"/>
        <end position="203"/>
    </location>
</feature>
<feature type="domain" description="ABC transporter" evidence="1">
    <location>
        <begin position="2"/>
        <end position="203"/>
    </location>
</feature>
<feature type="binding site" evidence="1">
    <location>
        <begin position="34"/>
        <end position="41"/>
    </location>
    <ligand>
        <name>ATP</name>
        <dbReference type="ChEBI" id="CHEBI:30616"/>
    </ligand>
</feature>
<comment type="function">
    <text evidence="1">Part of the ABC transporter complex CcmAB involved in the biogenesis of c-type cytochromes; once thought to export heme, this seems not to be the case, but its exact role is uncertain. Responsible for energy coupling to the transport system.</text>
</comment>
<comment type="catalytic activity">
    <reaction evidence="1">
        <text>heme b(in) + ATP + H2O = heme b(out) + ADP + phosphate + H(+)</text>
        <dbReference type="Rhea" id="RHEA:19261"/>
        <dbReference type="ChEBI" id="CHEBI:15377"/>
        <dbReference type="ChEBI" id="CHEBI:15378"/>
        <dbReference type="ChEBI" id="CHEBI:30616"/>
        <dbReference type="ChEBI" id="CHEBI:43474"/>
        <dbReference type="ChEBI" id="CHEBI:60344"/>
        <dbReference type="ChEBI" id="CHEBI:456216"/>
        <dbReference type="EC" id="7.6.2.5"/>
    </reaction>
</comment>
<comment type="subunit">
    <text evidence="1">The complex is composed of two ATP-binding proteins (CcmA) and two transmembrane proteins (CcmB).</text>
</comment>
<comment type="subcellular location">
    <subcellularLocation>
        <location evidence="1">Cell inner membrane</location>
        <topology evidence="1">Peripheral membrane protein</topology>
    </subcellularLocation>
</comment>
<comment type="similarity">
    <text evidence="1">Belongs to the ABC transporter superfamily. CcmA exporter (TC 3.A.1.107) family.</text>
</comment>
<name>CCMA_PSEAI</name>
<keyword id="KW-0067">ATP-binding</keyword>
<keyword id="KW-0997">Cell inner membrane</keyword>
<keyword id="KW-1003">Cell membrane</keyword>
<keyword id="KW-0201">Cytochrome c-type biogenesis</keyword>
<keyword id="KW-0472">Membrane</keyword>
<keyword id="KW-0547">Nucleotide-binding</keyword>
<keyword id="KW-1278">Translocase</keyword>
<keyword id="KW-0813">Transport</keyword>
<accession>Q8GQ92</accession>
<gene>
    <name evidence="1" type="primary">ccmA</name>
</gene>
<sequence>MLEALDLAGVRGERRLFDHLTFRIVPGECLSVHGENGSGKTTLLRTLAGFATPAAGRVLWKGKPLRNQWSEYQRELVYNGHGIGLKEDLNALDNLLAAAAIAGEPVTTECVESALDEVGLAEHRHLPFRMLSQGQKRRASLARLLLYRRKLWILDEPSTALDQFGARWLGELIHRHQSRGGMVVLTSHQELALKTSQTVRMGA</sequence>
<protein>
    <recommendedName>
        <fullName evidence="1">Cytochrome c biogenesis ATP-binding export protein CcmA</fullName>
        <ecNumber evidence="1">7.6.2.5</ecNumber>
    </recommendedName>
    <alternativeName>
        <fullName evidence="1">Heme exporter protein A</fullName>
    </alternativeName>
</protein>
<dbReference type="EC" id="7.6.2.5" evidence="1"/>
<dbReference type="EMBL" id="AF440523">
    <property type="protein sequence ID" value="AAN62111.1"/>
    <property type="molecule type" value="Genomic_DNA"/>
</dbReference>
<dbReference type="SMR" id="Q8GQ92"/>
<dbReference type="GO" id="GO:0005886">
    <property type="term" value="C:plasma membrane"/>
    <property type="evidence" value="ECO:0007669"/>
    <property type="project" value="UniProtKB-SubCell"/>
</dbReference>
<dbReference type="GO" id="GO:0015439">
    <property type="term" value="F:ABC-type heme transporter activity"/>
    <property type="evidence" value="ECO:0007669"/>
    <property type="project" value="UniProtKB-EC"/>
</dbReference>
<dbReference type="GO" id="GO:0005524">
    <property type="term" value="F:ATP binding"/>
    <property type="evidence" value="ECO:0007669"/>
    <property type="project" value="UniProtKB-KW"/>
</dbReference>
<dbReference type="GO" id="GO:0016887">
    <property type="term" value="F:ATP hydrolysis activity"/>
    <property type="evidence" value="ECO:0007669"/>
    <property type="project" value="InterPro"/>
</dbReference>
<dbReference type="GO" id="GO:0017004">
    <property type="term" value="P:cytochrome complex assembly"/>
    <property type="evidence" value="ECO:0007669"/>
    <property type="project" value="UniProtKB-KW"/>
</dbReference>
<dbReference type="Gene3D" id="3.40.50.300">
    <property type="entry name" value="P-loop containing nucleotide triphosphate hydrolases"/>
    <property type="match status" value="1"/>
</dbReference>
<dbReference type="InterPro" id="IPR003593">
    <property type="entry name" value="AAA+_ATPase"/>
</dbReference>
<dbReference type="InterPro" id="IPR003439">
    <property type="entry name" value="ABC_transporter-like_ATP-bd"/>
</dbReference>
<dbReference type="InterPro" id="IPR017871">
    <property type="entry name" value="ABC_transporter-like_CS"/>
</dbReference>
<dbReference type="InterPro" id="IPR005895">
    <property type="entry name" value="ABC_transptr_haem_export_CcmA"/>
</dbReference>
<dbReference type="InterPro" id="IPR027417">
    <property type="entry name" value="P-loop_NTPase"/>
</dbReference>
<dbReference type="NCBIfam" id="TIGR01189">
    <property type="entry name" value="ccmA"/>
    <property type="match status" value="1"/>
</dbReference>
<dbReference type="NCBIfam" id="NF010061">
    <property type="entry name" value="PRK13538.1"/>
    <property type="match status" value="1"/>
</dbReference>
<dbReference type="PANTHER" id="PTHR43499">
    <property type="entry name" value="ABC TRANSPORTER I FAMILY MEMBER 1"/>
    <property type="match status" value="1"/>
</dbReference>
<dbReference type="PANTHER" id="PTHR43499:SF1">
    <property type="entry name" value="ABC TRANSPORTER I FAMILY MEMBER 1"/>
    <property type="match status" value="1"/>
</dbReference>
<dbReference type="Pfam" id="PF00005">
    <property type="entry name" value="ABC_tran"/>
    <property type="match status" value="1"/>
</dbReference>
<dbReference type="SMART" id="SM00382">
    <property type="entry name" value="AAA"/>
    <property type="match status" value="1"/>
</dbReference>
<dbReference type="SUPFAM" id="SSF52540">
    <property type="entry name" value="P-loop containing nucleoside triphosphate hydrolases"/>
    <property type="match status" value="1"/>
</dbReference>
<dbReference type="PROSITE" id="PS00211">
    <property type="entry name" value="ABC_TRANSPORTER_1"/>
    <property type="match status" value="1"/>
</dbReference>
<dbReference type="PROSITE" id="PS50893">
    <property type="entry name" value="ABC_TRANSPORTER_2"/>
    <property type="match status" value="1"/>
</dbReference>
<dbReference type="PROSITE" id="PS51243">
    <property type="entry name" value="CCMA"/>
    <property type="match status" value="1"/>
</dbReference>
<evidence type="ECO:0000255" key="1">
    <source>
        <dbReference type="HAMAP-Rule" id="MF_01707"/>
    </source>
</evidence>
<proteinExistence type="inferred from homology"/>
<reference key="1">
    <citation type="journal article" date="2002" name="J. Bacteriol.">
        <title>Gene islands integrated into tRNA(Gly) genes confer genome diversity on a Pseudomonas aeruginosa clone.</title>
        <authorList>
            <person name="Larbig K.D."/>
            <person name="Christmann A."/>
            <person name="Johann A."/>
            <person name="Klockgether J."/>
            <person name="Hartsch T."/>
            <person name="Merkl R."/>
            <person name="Wiehlmann L."/>
            <person name="Fritz H.-J."/>
            <person name="Tuemmler B."/>
        </authorList>
    </citation>
    <scope>NUCLEOTIDE SEQUENCE [GENOMIC DNA]</scope>
    <source>
        <strain>C</strain>
    </source>
</reference>
<organism>
    <name type="scientific">Pseudomonas aeruginosa</name>
    <dbReference type="NCBI Taxonomy" id="287"/>
    <lineage>
        <taxon>Bacteria</taxon>
        <taxon>Pseudomonadati</taxon>
        <taxon>Pseudomonadota</taxon>
        <taxon>Gammaproteobacteria</taxon>
        <taxon>Pseudomonadales</taxon>
        <taxon>Pseudomonadaceae</taxon>
        <taxon>Pseudomonas</taxon>
    </lineage>
</organism>